<proteinExistence type="inferred from homology"/>
<reference key="1">
    <citation type="submission" date="2002-12" db="EMBL/GenBank/DDBJ databases">
        <title>Complete genome sequence of Vibrio vulnificus CMCP6.</title>
        <authorList>
            <person name="Rhee J.H."/>
            <person name="Kim S.Y."/>
            <person name="Chung S.S."/>
            <person name="Kim J.J."/>
            <person name="Moon Y.H."/>
            <person name="Jeong H."/>
            <person name="Choy H.E."/>
        </authorList>
    </citation>
    <scope>NUCLEOTIDE SEQUENCE [LARGE SCALE GENOMIC DNA]</scope>
    <source>
        <strain>CMCP6</strain>
    </source>
</reference>
<name>YGFZ_VIBVU</name>
<sequence>MQSTQPIQRCVLGSQQALPELAVSLLDNLGLITMTGNDKKSYLQGQVTCDVVSLETDQVTWGGHCDAKGKLWSVFRLFHYADGYAMLQDKSAIDVELRELKKYAVFAKVEINVSDAILLGVCGVQAEQAIAKLTNNAEAAVVTFAQGTAVKISPQRWLLVVDANQQDEVLAMLATAPLCDHALWDLYDILEVAPRIPAFAQNEHIPQAVNLQAVNGISFKKGCYTGQETVARAKYRGINKRALYRLSGTIAPSAPETTISLERSVGDNWRAAGEALVSYHFDDGRATGLFVLPNDLEPETQFRLAGQSEQLWQREPLPYSLDDE</sequence>
<gene>
    <name type="ordered locus">VV1_1556</name>
</gene>
<organism>
    <name type="scientific">Vibrio vulnificus (strain CMCP6)</name>
    <dbReference type="NCBI Taxonomy" id="216895"/>
    <lineage>
        <taxon>Bacteria</taxon>
        <taxon>Pseudomonadati</taxon>
        <taxon>Pseudomonadota</taxon>
        <taxon>Gammaproteobacteria</taxon>
        <taxon>Vibrionales</taxon>
        <taxon>Vibrionaceae</taxon>
        <taxon>Vibrio</taxon>
    </lineage>
</organism>
<comment type="function">
    <text evidence="1">Folate-binding protein involved in regulating the level of ATP-DnaA and in the modification of some tRNAs. It is probably a key factor in regulatory networks that act via tRNA modification, such as initiation of chromosomal replication.</text>
</comment>
<comment type="subcellular location">
    <subcellularLocation>
        <location evidence="1">Cytoplasm</location>
    </subcellularLocation>
</comment>
<comment type="similarity">
    <text evidence="1">Belongs to the tRNA-modifying YgfZ family.</text>
</comment>
<evidence type="ECO:0000255" key="1">
    <source>
        <dbReference type="HAMAP-Rule" id="MF_01175"/>
    </source>
</evidence>
<protein>
    <recommendedName>
        <fullName evidence="1">tRNA-modifying protein YgfZ</fullName>
    </recommendedName>
</protein>
<feature type="chain" id="PRO_0000262906" description="tRNA-modifying protein YgfZ">
    <location>
        <begin position="1"/>
        <end position="324"/>
    </location>
</feature>
<feature type="binding site" evidence="1">
    <location>
        <position position="184"/>
    </location>
    <ligand>
        <name>folate</name>
        <dbReference type="ChEBI" id="CHEBI:62501"/>
    </ligand>
</feature>
<accession>Q8DC85</accession>
<keyword id="KW-0963">Cytoplasm</keyword>
<keyword id="KW-0290">Folate-binding</keyword>
<keyword id="KW-0819">tRNA processing</keyword>
<dbReference type="EMBL" id="AE016795">
    <property type="protein sequence ID" value="AAO09980.1"/>
    <property type="molecule type" value="Genomic_DNA"/>
</dbReference>
<dbReference type="RefSeq" id="WP_011079491.1">
    <property type="nucleotide sequence ID" value="NC_004459.3"/>
</dbReference>
<dbReference type="SMR" id="Q8DC85"/>
<dbReference type="KEGG" id="vvu:VV1_1556"/>
<dbReference type="HOGENOM" id="CLU_007884_6_1_6"/>
<dbReference type="Proteomes" id="UP000002275">
    <property type="component" value="Chromosome 1"/>
</dbReference>
<dbReference type="GO" id="GO:0005737">
    <property type="term" value="C:cytoplasm"/>
    <property type="evidence" value="ECO:0007669"/>
    <property type="project" value="UniProtKB-SubCell"/>
</dbReference>
<dbReference type="GO" id="GO:0005542">
    <property type="term" value="F:folic acid binding"/>
    <property type="evidence" value="ECO:0007669"/>
    <property type="project" value="UniProtKB-UniRule"/>
</dbReference>
<dbReference type="GO" id="GO:0016226">
    <property type="term" value="P:iron-sulfur cluster assembly"/>
    <property type="evidence" value="ECO:0007669"/>
    <property type="project" value="TreeGrafter"/>
</dbReference>
<dbReference type="GO" id="GO:0009451">
    <property type="term" value="P:RNA modification"/>
    <property type="evidence" value="ECO:0007669"/>
    <property type="project" value="InterPro"/>
</dbReference>
<dbReference type="GO" id="GO:0008033">
    <property type="term" value="P:tRNA processing"/>
    <property type="evidence" value="ECO:0007669"/>
    <property type="project" value="UniProtKB-UniRule"/>
</dbReference>
<dbReference type="FunFam" id="3.30.70.1400:FF:000002">
    <property type="entry name" value="tRNA-modifying protein YgfZ"/>
    <property type="match status" value="1"/>
</dbReference>
<dbReference type="Gene3D" id="2.40.30.160">
    <property type="match status" value="1"/>
</dbReference>
<dbReference type="Gene3D" id="3.30.70.1630">
    <property type="match status" value="1"/>
</dbReference>
<dbReference type="Gene3D" id="3.30.70.1400">
    <property type="entry name" value="Aminomethyltransferase beta-barrel domains"/>
    <property type="match status" value="1"/>
</dbReference>
<dbReference type="HAMAP" id="MF_01175">
    <property type="entry name" value="tRNA_modifying_YgfZ"/>
    <property type="match status" value="1"/>
</dbReference>
<dbReference type="InterPro" id="IPR029043">
    <property type="entry name" value="GcvT/YgfZ_C"/>
</dbReference>
<dbReference type="InterPro" id="IPR023758">
    <property type="entry name" value="tRNA-modifying_YgfZ"/>
</dbReference>
<dbReference type="InterPro" id="IPR045179">
    <property type="entry name" value="YgfZ/GcvT"/>
</dbReference>
<dbReference type="InterPro" id="IPR017703">
    <property type="entry name" value="YgfZ/GcvT_CS"/>
</dbReference>
<dbReference type="InterPro" id="IPR048451">
    <property type="entry name" value="YgfZ_barrel"/>
</dbReference>
<dbReference type="NCBIfam" id="NF007110">
    <property type="entry name" value="PRK09559.1"/>
    <property type="match status" value="1"/>
</dbReference>
<dbReference type="NCBIfam" id="TIGR03317">
    <property type="entry name" value="ygfZ_signature"/>
    <property type="match status" value="1"/>
</dbReference>
<dbReference type="PANTHER" id="PTHR22602">
    <property type="entry name" value="TRANSFERASE CAF17, MITOCHONDRIAL-RELATED"/>
    <property type="match status" value="1"/>
</dbReference>
<dbReference type="PANTHER" id="PTHR22602:SF0">
    <property type="entry name" value="TRANSFERASE CAF17, MITOCHONDRIAL-RELATED"/>
    <property type="match status" value="1"/>
</dbReference>
<dbReference type="Pfam" id="PF21130">
    <property type="entry name" value="YgfZ_barrel"/>
    <property type="match status" value="1"/>
</dbReference>
<dbReference type="SUPFAM" id="SSF101790">
    <property type="entry name" value="Aminomethyltransferase beta-barrel domain"/>
    <property type="match status" value="1"/>
</dbReference>
<dbReference type="SUPFAM" id="SSF103025">
    <property type="entry name" value="Folate-binding domain"/>
    <property type="match status" value="1"/>
</dbReference>